<accession>Q0AM08</accession>
<feature type="chain" id="PRO_1000020422" description="Threonine--tRNA ligase">
    <location>
        <begin position="1"/>
        <end position="644"/>
    </location>
</feature>
<feature type="domain" description="TGS" evidence="2">
    <location>
        <begin position="1"/>
        <end position="61"/>
    </location>
</feature>
<feature type="region of interest" description="Catalytic" evidence="1">
    <location>
        <begin position="243"/>
        <end position="536"/>
    </location>
</feature>
<feature type="binding site" evidence="1">
    <location>
        <position position="336"/>
    </location>
    <ligand>
        <name>Zn(2+)</name>
        <dbReference type="ChEBI" id="CHEBI:29105"/>
    </ligand>
</feature>
<feature type="binding site" evidence="1">
    <location>
        <position position="387"/>
    </location>
    <ligand>
        <name>Zn(2+)</name>
        <dbReference type="ChEBI" id="CHEBI:29105"/>
    </ligand>
</feature>
<feature type="binding site" evidence="1">
    <location>
        <position position="513"/>
    </location>
    <ligand>
        <name>Zn(2+)</name>
        <dbReference type="ChEBI" id="CHEBI:29105"/>
    </ligand>
</feature>
<reference key="1">
    <citation type="submission" date="2006-08" db="EMBL/GenBank/DDBJ databases">
        <title>Complete sequence of Maricaulis maris MCS10.</title>
        <authorList>
            <consortium name="US DOE Joint Genome Institute"/>
            <person name="Copeland A."/>
            <person name="Lucas S."/>
            <person name="Lapidus A."/>
            <person name="Barry K."/>
            <person name="Detter J.C."/>
            <person name="Glavina del Rio T."/>
            <person name="Hammon N."/>
            <person name="Israni S."/>
            <person name="Dalin E."/>
            <person name="Tice H."/>
            <person name="Pitluck S."/>
            <person name="Saunders E."/>
            <person name="Brettin T."/>
            <person name="Bruce D."/>
            <person name="Han C."/>
            <person name="Tapia R."/>
            <person name="Gilna P."/>
            <person name="Schmutz J."/>
            <person name="Larimer F."/>
            <person name="Land M."/>
            <person name="Hauser L."/>
            <person name="Kyrpides N."/>
            <person name="Mikhailova N."/>
            <person name="Viollier P."/>
            <person name="Stephens C."/>
            <person name="Richardson P."/>
        </authorList>
    </citation>
    <scope>NUCLEOTIDE SEQUENCE [LARGE SCALE GENOMIC DNA]</scope>
    <source>
        <strain>MCS10</strain>
    </source>
</reference>
<proteinExistence type="inferred from homology"/>
<evidence type="ECO:0000255" key="1">
    <source>
        <dbReference type="HAMAP-Rule" id="MF_00184"/>
    </source>
</evidence>
<evidence type="ECO:0000255" key="2">
    <source>
        <dbReference type="PROSITE-ProRule" id="PRU01228"/>
    </source>
</evidence>
<gene>
    <name evidence="1" type="primary">thrS</name>
    <name type="ordered locus">Mmar10_2393</name>
</gene>
<keyword id="KW-0030">Aminoacyl-tRNA synthetase</keyword>
<keyword id="KW-0067">ATP-binding</keyword>
<keyword id="KW-0963">Cytoplasm</keyword>
<keyword id="KW-0436">Ligase</keyword>
<keyword id="KW-0479">Metal-binding</keyword>
<keyword id="KW-0547">Nucleotide-binding</keyword>
<keyword id="KW-0648">Protein biosynthesis</keyword>
<keyword id="KW-1185">Reference proteome</keyword>
<keyword id="KW-0694">RNA-binding</keyword>
<keyword id="KW-0820">tRNA-binding</keyword>
<keyword id="KW-0862">Zinc</keyword>
<sequence length="644" mass="72847">MINVTLPDGSKRELPDGASPLDLAADISKSLAKAAIIATVDGQDWDLKRPLDGDAQVAIITRKDDKALEVIRHDTAHILAQAVQDLFPGTQVTIGPAIEDGFYYDFARSEPFTPEDFEAIEKRMGEIVDADLPFEREVWDRNDAIAKFEEMGEAYKAELIRDLPEDETITIYRQGEWFDLCLGPHLPSTGKIGKAFKLMKVAGAYWRGDHRNAMLQRIYGTAWADDKQLKAHLHRIEEAEKRDHRKLGKQMELFHFQEEAQGQVFWHPNGWRLYRTVTSYMRRRLEAAGYVEIRTPQLMDRKFWEASGHWDKYRENMFISSIDQEEKVLAVKPMNCPCHVQVFNQGQKSYRDLPLRMAEFGSCHRYEPSGSLHGLMRVRGFVQDDAHIFCTSDQITAEVSDFCELLKSVYADFGFEEPRIKFSDRPEQRVGSDEVWDQAEASLKAAAEASGLDYEYNPGDGAFYGPKLDFVVKDAIGREWQTGTIQCDFNLPERLDASFIGDDSEKHRPVMLHRAILGSLERFLGVLIESYAGKLPFWLAPRQVVIATITSDADGYAEEVKAAMVKAGLHAETDLRNEKINYKVREHSVGKVPVIAVVGRKEAEDGTLALRFLGEGGKTQEILSLADAIARLSEDAKAPDLKRV</sequence>
<name>SYT_MARMM</name>
<protein>
    <recommendedName>
        <fullName evidence="1">Threonine--tRNA ligase</fullName>
        <ecNumber evidence="1">6.1.1.3</ecNumber>
    </recommendedName>
    <alternativeName>
        <fullName evidence="1">Threonyl-tRNA synthetase</fullName>
        <shortName evidence="1">ThrRS</shortName>
    </alternativeName>
</protein>
<dbReference type="EC" id="6.1.1.3" evidence="1"/>
<dbReference type="EMBL" id="CP000449">
    <property type="protein sequence ID" value="ABI66685.1"/>
    <property type="molecule type" value="Genomic_DNA"/>
</dbReference>
<dbReference type="RefSeq" id="WP_011644330.1">
    <property type="nucleotide sequence ID" value="NC_008347.1"/>
</dbReference>
<dbReference type="SMR" id="Q0AM08"/>
<dbReference type="STRING" id="394221.Mmar10_2393"/>
<dbReference type="KEGG" id="mmr:Mmar10_2393"/>
<dbReference type="eggNOG" id="COG0441">
    <property type="taxonomic scope" value="Bacteria"/>
</dbReference>
<dbReference type="HOGENOM" id="CLU_008554_0_1_5"/>
<dbReference type="OrthoDB" id="9802304at2"/>
<dbReference type="Proteomes" id="UP000001964">
    <property type="component" value="Chromosome"/>
</dbReference>
<dbReference type="GO" id="GO:0005737">
    <property type="term" value="C:cytoplasm"/>
    <property type="evidence" value="ECO:0007669"/>
    <property type="project" value="UniProtKB-SubCell"/>
</dbReference>
<dbReference type="GO" id="GO:0005524">
    <property type="term" value="F:ATP binding"/>
    <property type="evidence" value="ECO:0007669"/>
    <property type="project" value="UniProtKB-UniRule"/>
</dbReference>
<dbReference type="GO" id="GO:0046872">
    <property type="term" value="F:metal ion binding"/>
    <property type="evidence" value="ECO:0007669"/>
    <property type="project" value="UniProtKB-KW"/>
</dbReference>
<dbReference type="GO" id="GO:0004829">
    <property type="term" value="F:threonine-tRNA ligase activity"/>
    <property type="evidence" value="ECO:0007669"/>
    <property type="project" value="UniProtKB-UniRule"/>
</dbReference>
<dbReference type="GO" id="GO:0000049">
    <property type="term" value="F:tRNA binding"/>
    <property type="evidence" value="ECO:0007669"/>
    <property type="project" value="UniProtKB-KW"/>
</dbReference>
<dbReference type="GO" id="GO:0006435">
    <property type="term" value="P:threonyl-tRNA aminoacylation"/>
    <property type="evidence" value="ECO:0007669"/>
    <property type="project" value="UniProtKB-UniRule"/>
</dbReference>
<dbReference type="CDD" id="cd01667">
    <property type="entry name" value="TGS_ThrRS"/>
    <property type="match status" value="1"/>
</dbReference>
<dbReference type="CDD" id="cd00860">
    <property type="entry name" value="ThrRS_anticodon"/>
    <property type="match status" value="1"/>
</dbReference>
<dbReference type="CDD" id="cd00771">
    <property type="entry name" value="ThrRS_core"/>
    <property type="match status" value="1"/>
</dbReference>
<dbReference type="FunFam" id="3.10.20.30:FF:000005">
    <property type="entry name" value="Threonine--tRNA ligase"/>
    <property type="match status" value="1"/>
</dbReference>
<dbReference type="FunFam" id="3.30.54.20:FF:000002">
    <property type="entry name" value="Threonine--tRNA ligase"/>
    <property type="match status" value="1"/>
</dbReference>
<dbReference type="FunFam" id="3.30.930.10:FF:000002">
    <property type="entry name" value="Threonine--tRNA ligase"/>
    <property type="match status" value="1"/>
</dbReference>
<dbReference type="FunFam" id="3.30.980.10:FF:000005">
    <property type="entry name" value="Threonyl-tRNA synthetase, mitochondrial"/>
    <property type="match status" value="1"/>
</dbReference>
<dbReference type="Gene3D" id="3.10.20.30">
    <property type="match status" value="1"/>
</dbReference>
<dbReference type="Gene3D" id="3.30.54.20">
    <property type="match status" value="1"/>
</dbReference>
<dbReference type="Gene3D" id="3.40.50.800">
    <property type="entry name" value="Anticodon-binding domain"/>
    <property type="match status" value="1"/>
</dbReference>
<dbReference type="Gene3D" id="3.30.930.10">
    <property type="entry name" value="Bira Bifunctional Protein, Domain 2"/>
    <property type="match status" value="1"/>
</dbReference>
<dbReference type="Gene3D" id="3.30.980.10">
    <property type="entry name" value="Threonyl-trna Synthetase, Chain A, domain 2"/>
    <property type="match status" value="1"/>
</dbReference>
<dbReference type="HAMAP" id="MF_00184">
    <property type="entry name" value="Thr_tRNA_synth"/>
    <property type="match status" value="1"/>
</dbReference>
<dbReference type="InterPro" id="IPR002314">
    <property type="entry name" value="aa-tRNA-synt_IIb"/>
</dbReference>
<dbReference type="InterPro" id="IPR006195">
    <property type="entry name" value="aa-tRNA-synth_II"/>
</dbReference>
<dbReference type="InterPro" id="IPR045864">
    <property type="entry name" value="aa-tRNA-synth_II/BPL/LPL"/>
</dbReference>
<dbReference type="InterPro" id="IPR004154">
    <property type="entry name" value="Anticodon-bd"/>
</dbReference>
<dbReference type="InterPro" id="IPR036621">
    <property type="entry name" value="Anticodon-bd_dom_sf"/>
</dbReference>
<dbReference type="InterPro" id="IPR012675">
    <property type="entry name" value="Beta-grasp_dom_sf"/>
</dbReference>
<dbReference type="InterPro" id="IPR004095">
    <property type="entry name" value="TGS"/>
</dbReference>
<dbReference type="InterPro" id="IPR012676">
    <property type="entry name" value="TGS-like"/>
</dbReference>
<dbReference type="InterPro" id="IPR002320">
    <property type="entry name" value="Thr-tRNA-ligase_IIa"/>
</dbReference>
<dbReference type="InterPro" id="IPR018163">
    <property type="entry name" value="Thr/Ala-tRNA-synth_IIc_edit"/>
</dbReference>
<dbReference type="InterPro" id="IPR047246">
    <property type="entry name" value="ThrRS_anticodon"/>
</dbReference>
<dbReference type="InterPro" id="IPR033728">
    <property type="entry name" value="ThrRS_core"/>
</dbReference>
<dbReference type="InterPro" id="IPR012947">
    <property type="entry name" value="tRNA_SAD"/>
</dbReference>
<dbReference type="NCBIfam" id="TIGR00418">
    <property type="entry name" value="thrS"/>
    <property type="match status" value="1"/>
</dbReference>
<dbReference type="PANTHER" id="PTHR11451:SF44">
    <property type="entry name" value="THREONINE--TRNA LIGASE, CHLOROPLASTIC_MITOCHONDRIAL 2"/>
    <property type="match status" value="1"/>
</dbReference>
<dbReference type="PANTHER" id="PTHR11451">
    <property type="entry name" value="THREONINE-TRNA LIGASE"/>
    <property type="match status" value="1"/>
</dbReference>
<dbReference type="Pfam" id="PF03129">
    <property type="entry name" value="HGTP_anticodon"/>
    <property type="match status" value="1"/>
</dbReference>
<dbReference type="Pfam" id="PF02824">
    <property type="entry name" value="TGS"/>
    <property type="match status" value="1"/>
</dbReference>
<dbReference type="Pfam" id="PF00587">
    <property type="entry name" value="tRNA-synt_2b"/>
    <property type="match status" value="1"/>
</dbReference>
<dbReference type="Pfam" id="PF07973">
    <property type="entry name" value="tRNA_SAD"/>
    <property type="match status" value="1"/>
</dbReference>
<dbReference type="PRINTS" id="PR01047">
    <property type="entry name" value="TRNASYNTHTHR"/>
</dbReference>
<dbReference type="SMART" id="SM00863">
    <property type="entry name" value="tRNA_SAD"/>
    <property type="match status" value="1"/>
</dbReference>
<dbReference type="SUPFAM" id="SSF52954">
    <property type="entry name" value="Class II aaRS ABD-related"/>
    <property type="match status" value="1"/>
</dbReference>
<dbReference type="SUPFAM" id="SSF55681">
    <property type="entry name" value="Class II aaRS and biotin synthetases"/>
    <property type="match status" value="1"/>
</dbReference>
<dbReference type="SUPFAM" id="SSF81271">
    <property type="entry name" value="TGS-like"/>
    <property type="match status" value="1"/>
</dbReference>
<dbReference type="SUPFAM" id="SSF55186">
    <property type="entry name" value="ThrRS/AlaRS common domain"/>
    <property type="match status" value="1"/>
</dbReference>
<dbReference type="PROSITE" id="PS50862">
    <property type="entry name" value="AA_TRNA_LIGASE_II"/>
    <property type="match status" value="1"/>
</dbReference>
<dbReference type="PROSITE" id="PS51880">
    <property type="entry name" value="TGS"/>
    <property type="match status" value="1"/>
</dbReference>
<organism>
    <name type="scientific">Maricaulis maris (strain MCS10)</name>
    <name type="common">Caulobacter maris</name>
    <dbReference type="NCBI Taxonomy" id="394221"/>
    <lineage>
        <taxon>Bacteria</taxon>
        <taxon>Pseudomonadati</taxon>
        <taxon>Pseudomonadota</taxon>
        <taxon>Alphaproteobacteria</taxon>
        <taxon>Maricaulales</taxon>
        <taxon>Maricaulaceae</taxon>
        <taxon>Maricaulis</taxon>
    </lineage>
</organism>
<comment type="function">
    <text evidence="1">Catalyzes the attachment of threonine to tRNA(Thr) in a two-step reaction: L-threonine is first activated by ATP to form Thr-AMP and then transferred to the acceptor end of tRNA(Thr). Also edits incorrectly charged L-seryl-tRNA(Thr).</text>
</comment>
<comment type="catalytic activity">
    <reaction evidence="1">
        <text>tRNA(Thr) + L-threonine + ATP = L-threonyl-tRNA(Thr) + AMP + diphosphate + H(+)</text>
        <dbReference type="Rhea" id="RHEA:24624"/>
        <dbReference type="Rhea" id="RHEA-COMP:9670"/>
        <dbReference type="Rhea" id="RHEA-COMP:9704"/>
        <dbReference type="ChEBI" id="CHEBI:15378"/>
        <dbReference type="ChEBI" id="CHEBI:30616"/>
        <dbReference type="ChEBI" id="CHEBI:33019"/>
        <dbReference type="ChEBI" id="CHEBI:57926"/>
        <dbReference type="ChEBI" id="CHEBI:78442"/>
        <dbReference type="ChEBI" id="CHEBI:78534"/>
        <dbReference type="ChEBI" id="CHEBI:456215"/>
        <dbReference type="EC" id="6.1.1.3"/>
    </reaction>
</comment>
<comment type="cofactor">
    <cofactor evidence="1">
        <name>Zn(2+)</name>
        <dbReference type="ChEBI" id="CHEBI:29105"/>
    </cofactor>
    <text evidence="1">Binds 1 zinc ion per subunit.</text>
</comment>
<comment type="subunit">
    <text evidence="1">Homodimer.</text>
</comment>
<comment type="subcellular location">
    <subcellularLocation>
        <location evidence="1">Cytoplasm</location>
    </subcellularLocation>
</comment>
<comment type="similarity">
    <text evidence="1">Belongs to the class-II aminoacyl-tRNA synthetase family.</text>
</comment>